<protein>
    <recommendedName>
        <fullName evidence="1">Aspartate--tRNA(Asp/Asn) ligase</fullName>
        <ecNumber evidence="1">6.1.1.23</ecNumber>
    </recommendedName>
    <alternativeName>
        <fullName evidence="1">Aspartyl-tRNA synthetase</fullName>
        <shortName evidence="1">AspRS</shortName>
    </alternativeName>
    <alternativeName>
        <fullName evidence="1">Non-discriminating aspartyl-tRNA synthetase</fullName>
        <shortName evidence="1">ND-AspRS</shortName>
    </alternativeName>
</protein>
<keyword id="KW-0030">Aminoacyl-tRNA synthetase</keyword>
<keyword id="KW-0067">ATP-binding</keyword>
<keyword id="KW-0963">Cytoplasm</keyword>
<keyword id="KW-0436">Ligase</keyword>
<keyword id="KW-0547">Nucleotide-binding</keyword>
<keyword id="KW-0648">Protein biosynthesis</keyword>
<sequence>MRSHYCTDLSSNDIGKKVQLCGWVNSYRDHGGVIFIDLRDRTGIIQLVCDPKDSKSAHEIGSKVRDEYVLKATGTIRARGEGLINPKLKTGEIEVIVDELYIENESAALPFVIGDPNVGEDIRLKYRFLDLRNTESFDKFKLRSKASIACRNALDRLGFLEVETPILTRATPEGARDYLVPSRVYPGSFYALPQSPQLFKQLLMCAGFDKYFQIARCFRDEDLRADRQPEFTQIDVEMSFCTQEDVIKVGEEILKDIFYACGHDIITPFRRMEYKDAMETYGNDKPDLRFDLPMVDVIDIFAKSNNEIFSTPAQNIKKNRAKAIKVPGGDNIFSKRQMQRFEEFVRKFGAKGLAFIQVKEDGLKGPLVKFFEQEQIDELIKRCELKVGDVVFFGIGDKKTVLDYMGRFRAFLANELGIIDENKLEFLWVVNFPMFEQNDDGSYSAMHHPFTMPNNPDEEDLEDITSIAYDVVLNGVELGGGSIRIHKNDIQQKVFKLLKIDEAEQREKFGFLLDALSFGAPPHGGFAIGLDRLIMLVTKSASIRDVIAFPKTQRASCPMTKAPSNVSNEQLRELGLRLKGKETK</sequence>
<evidence type="ECO:0000255" key="1">
    <source>
        <dbReference type="HAMAP-Rule" id="MF_00044"/>
    </source>
</evidence>
<gene>
    <name evidence="1" type="primary">aspS</name>
    <name type="ordered locus">CFF8240_1196</name>
</gene>
<feature type="chain" id="PRO_1000006655" description="Aspartate--tRNA(Asp/Asn) ligase">
    <location>
        <begin position="1"/>
        <end position="584"/>
    </location>
</feature>
<feature type="region of interest" description="Aspartate" evidence="1">
    <location>
        <begin position="197"/>
        <end position="200"/>
    </location>
</feature>
<feature type="binding site" evidence="1">
    <location>
        <position position="173"/>
    </location>
    <ligand>
        <name>L-aspartate</name>
        <dbReference type="ChEBI" id="CHEBI:29991"/>
    </ligand>
</feature>
<feature type="binding site" evidence="1">
    <location>
        <begin position="219"/>
        <end position="221"/>
    </location>
    <ligand>
        <name>ATP</name>
        <dbReference type="ChEBI" id="CHEBI:30616"/>
    </ligand>
</feature>
<feature type="binding site" evidence="1">
    <location>
        <position position="219"/>
    </location>
    <ligand>
        <name>L-aspartate</name>
        <dbReference type="ChEBI" id="CHEBI:29991"/>
    </ligand>
</feature>
<feature type="binding site" evidence="1">
    <location>
        <position position="228"/>
    </location>
    <ligand>
        <name>ATP</name>
        <dbReference type="ChEBI" id="CHEBI:30616"/>
    </ligand>
</feature>
<feature type="binding site" evidence="1">
    <location>
        <position position="447"/>
    </location>
    <ligand>
        <name>L-aspartate</name>
        <dbReference type="ChEBI" id="CHEBI:29991"/>
    </ligand>
</feature>
<feature type="binding site" evidence="1">
    <location>
        <position position="477"/>
    </location>
    <ligand>
        <name>ATP</name>
        <dbReference type="ChEBI" id="CHEBI:30616"/>
    </ligand>
</feature>
<feature type="binding site" evidence="1">
    <location>
        <position position="484"/>
    </location>
    <ligand>
        <name>L-aspartate</name>
        <dbReference type="ChEBI" id="CHEBI:29991"/>
    </ligand>
</feature>
<feature type="binding site" evidence="1">
    <location>
        <begin position="529"/>
        <end position="532"/>
    </location>
    <ligand>
        <name>ATP</name>
        <dbReference type="ChEBI" id="CHEBI:30616"/>
    </ligand>
</feature>
<feature type="site" description="Important for tRNA non-discrimination" evidence="1">
    <location>
        <position position="30"/>
    </location>
</feature>
<feature type="site" description="Important for tRNA non-discrimination" evidence="1">
    <location>
        <position position="82"/>
    </location>
</feature>
<accession>A0RQ71</accession>
<reference key="1">
    <citation type="submission" date="2006-11" db="EMBL/GenBank/DDBJ databases">
        <title>Sequence of Campylobacter fetus subsp. fetus 82-40.</title>
        <authorList>
            <person name="Fouts D.E."/>
            <person name="Nelson K.E."/>
        </authorList>
    </citation>
    <scope>NUCLEOTIDE SEQUENCE [LARGE SCALE GENOMIC DNA]</scope>
    <source>
        <strain>82-40</strain>
    </source>
</reference>
<organism>
    <name type="scientific">Campylobacter fetus subsp. fetus (strain 82-40)</name>
    <dbReference type="NCBI Taxonomy" id="360106"/>
    <lineage>
        <taxon>Bacteria</taxon>
        <taxon>Pseudomonadati</taxon>
        <taxon>Campylobacterota</taxon>
        <taxon>Epsilonproteobacteria</taxon>
        <taxon>Campylobacterales</taxon>
        <taxon>Campylobacteraceae</taxon>
        <taxon>Campylobacter</taxon>
    </lineage>
</organism>
<name>SYDND_CAMFF</name>
<comment type="function">
    <text evidence="1">Aspartyl-tRNA synthetase with relaxed tRNA specificity since it is able to aspartylate not only its cognate tRNA(Asp) but also tRNA(Asn). Reaction proceeds in two steps: L-aspartate is first activated by ATP to form Asp-AMP and then transferred to the acceptor end of tRNA(Asp/Asn).</text>
</comment>
<comment type="catalytic activity">
    <reaction evidence="1">
        <text>tRNA(Asx) + L-aspartate + ATP = L-aspartyl-tRNA(Asx) + AMP + diphosphate</text>
        <dbReference type="Rhea" id="RHEA:18349"/>
        <dbReference type="Rhea" id="RHEA-COMP:9710"/>
        <dbReference type="Rhea" id="RHEA-COMP:9711"/>
        <dbReference type="ChEBI" id="CHEBI:29991"/>
        <dbReference type="ChEBI" id="CHEBI:30616"/>
        <dbReference type="ChEBI" id="CHEBI:33019"/>
        <dbReference type="ChEBI" id="CHEBI:78442"/>
        <dbReference type="ChEBI" id="CHEBI:78516"/>
        <dbReference type="ChEBI" id="CHEBI:456215"/>
        <dbReference type="EC" id="6.1.1.23"/>
    </reaction>
</comment>
<comment type="subunit">
    <text evidence="1">Homodimer.</text>
</comment>
<comment type="subcellular location">
    <subcellularLocation>
        <location evidence="1">Cytoplasm</location>
    </subcellularLocation>
</comment>
<comment type="similarity">
    <text evidence="1">Belongs to the class-II aminoacyl-tRNA synthetase family. Type 1 subfamily.</text>
</comment>
<dbReference type="EC" id="6.1.1.23" evidence="1"/>
<dbReference type="EMBL" id="CP000487">
    <property type="protein sequence ID" value="ABK82373.1"/>
    <property type="molecule type" value="Genomic_DNA"/>
</dbReference>
<dbReference type="RefSeq" id="WP_002849857.1">
    <property type="nucleotide sequence ID" value="NC_008599.1"/>
</dbReference>
<dbReference type="SMR" id="A0RQ71"/>
<dbReference type="GeneID" id="61065021"/>
<dbReference type="KEGG" id="cff:CFF8240_1196"/>
<dbReference type="eggNOG" id="COG0173">
    <property type="taxonomic scope" value="Bacteria"/>
</dbReference>
<dbReference type="HOGENOM" id="CLU_014330_3_2_7"/>
<dbReference type="Proteomes" id="UP000000760">
    <property type="component" value="Chromosome"/>
</dbReference>
<dbReference type="GO" id="GO:0005737">
    <property type="term" value="C:cytoplasm"/>
    <property type="evidence" value="ECO:0007669"/>
    <property type="project" value="UniProtKB-SubCell"/>
</dbReference>
<dbReference type="GO" id="GO:0004815">
    <property type="term" value="F:aspartate-tRNA ligase activity"/>
    <property type="evidence" value="ECO:0007669"/>
    <property type="project" value="UniProtKB-UniRule"/>
</dbReference>
<dbReference type="GO" id="GO:0050560">
    <property type="term" value="F:aspartate-tRNA(Asn) ligase activity"/>
    <property type="evidence" value="ECO:0007669"/>
    <property type="project" value="UniProtKB-EC"/>
</dbReference>
<dbReference type="GO" id="GO:0005524">
    <property type="term" value="F:ATP binding"/>
    <property type="evidence" value="ECO:0007669"/>
    <property type="project" value="UniProtKB-UniRule"/>
</dbReference>
<dbReference type="GO" id="GO:0003676">
    <property type="term" value="F:nucleic acid binding"/>
    <property type="evidence" value="ECO:0007669"/>
    <property type="project" value="InterPro"/>
</dbReference>
<dbReference type="GO" id="GO:0006422">
    <property type="term" value="P:aspartyl-tRNA aminoacylation"/>
    <property type="evidence" value="ECO:0007669"/>
    <property type="project" value="UniProtKB-UniRule"/>
</dbReference>
<dbReference type="CDD" id="cd00777">
    <property type="entry name" value="AspRS_core"/>
    <property type="match status" value="1"/>
</dbReference>
<dbReference type="CDD" id="cd04317">
    <property type="entry name" value="EcAspRS_like_N"/>
    <property type="match status" value="1"/>
</dbReference>
<dbReference type="Gene3D" id="3.30.930.10">
    <property type="entry name" value="Bira Bifunctional Protein, Domain 2"/>
    <property type="match status" value="1"/>
</dbReference>
<dbReference type="Gene3D" id="3.30.1360.30">
    <property type="entry name" value="GAD-like domain"/>
    <property type="match status" value="1"/>
</dbReference>
<dbReference type="Gene3D" id="2.40.50.140">
    <property type="entry name" value="Nucleic acid-binding proteins"/>
    <property type="match status" value="1"/>
</dbReference>
<dbReference type="HAMAP" id="MF_00044">
    <property type="entry name" value="Asp_tRNA_synth_type1"/>
    <property type="match status" value="1"/>
</dbReference>
<dbReference type="InterPro" id="IPR004364">
    <property type="entry name" value="Aa-tRNA-synt_II"/>
</dbReference>
<dbReference type="InterPro" id="IPR006195">
    <property type="entry name" value="aa-tRNA-synth_II"/>
</dbReference>
<dbReference type="InterPro" id="IPR045864">
    <property type="entry name" value="aa-tRNA-synth_II/BPL/LPL"/>
</dbReference>
<dbReference type="InterPro" id="IPR004524">
    <property type="entry name" value="Asp-tRNA-ligase_1"/>
</dbReference>
<dbReference type="InterPro" id="IPR047089">
    <property type="entry name" value="Asp-tRNA-ligase_1_N"/>
</dbReference>
<dbReference type="InterPro" id="IPR002312">
    <property type="entry name" value="Asp/Asn-tRNA-synth_IIb"/>
</dbReference>
<dbReference type="InterPro" id="IPR047090">
    <property type="entry name" value="AspRS_core"/>
</dbReference>
<dbReference type="InterPro" id="IPR004115">
    <property type="entry name" value="GAD-like_sf"/>
</dbReference>
<dbReference type="InterPro" id="IPR029351">
    <property type="entry name" value="GAD_dom"/>
</dbReference>
<dbReference type="InterPro" id="IPR012340">
    <property type="entry name" value="NA-bd_OB-fold"/>
</dbReference>
<dbReference type="InterPro" id="IPR004365">
    <property type="entry name" value="NA-bd_OB_tRNA"/>
</dbReference>
<dbReference type="NCBIfam" id="TIGR00459">
    <property type="entry name" value="aspS_bact"/>
    <property type="match status" value="1"/>
</dbReference>
<dbReference type="NCBIfam" id="NF001750">
    <property type="entry name" value="PRK00476.1"/>
    <property type="match status" value="1"/>
</dbReference>
<dbReference type="PANTHER" id="PTHR22594:SF5">
    <property type="entry name" value="ASPARTATE--TRNA LIGASE, MITOCHONDRIAL"/>
    <property type="match status" value="1"/>
</dbReference>
<dbReference type="PANTHER" id="PTHR22594">
    <property type="entry name" value="ASPARTYL/LYSYL-TRNA SYNTHETASE"/>
    <property type="match status" value="1"/>
</dbReference>
<dbReference type="Pfam" id="PF02938">
    <property type="entry name" value="GAD"/>
    <property type="match status" value="1"/>
</dbReference>
<dbReference type="Pfam" id="PF00152">
    <property type="entry name" value="tRNA-synt_2"/>
    <property type="match status" value="1"/>
</dbReference>
<dbReference type="Pfam" id="PF01336">
    <property type="entry name" value="tRNA_anti-codon"/>
    <property type="match status" value="1"/>
</dbReference>
<dbReference type="PRINTS" id="PR01042">
    <property type="entry name" value="TRNASYNTHASP"/>
</dbReference>
<dbReference type="SUPFAM" id="SSF55681">
    <property type="entry name" value="Class II aaRS and biotin synthetases"/>
    <property type="match status" value="1"/>
</dbReference>
<dbReference type="SUPFAM" id="SSF55261">
    <property type="entry name" value="GAD domain-like"/>
    <property type="match status" value="1"/>
</dbReference>
<dbReference type="SUPFAM" id="SSF50249">
    <property type="entry name" value="Nucleic acid-binding proteins"/>
    <property type="match status" value="1"/>
</dbReference>
<dbReference type="PROSITE" id="PS50862">
    <property type="entry name" value="AA_TRNA_LIGASE_II"/>
    <property type="match status" value="1"/>
</dbReference>
<proteinExistence type="inferred from homology"/>